<protein>
    <recommendedName>
        <fullName>Putative ABC transporter ATP-binding protein PYRAB03730</fullName>
        <ecNumber>7.-.-.-</ecNumber>
    </recommendedName>
</protein>
<feature type="chain" id="PRO_0000092156" description="Putative ABC transporter ATP-binding protein PYRAB03730">
    <location>
        <begin position="1"/>
        <end position="280"/>
    </location>
</feature>
<feature type="domain" description="ABC transporter" evidence="2">
    <location>
        <begin position="4"/>
        <end position="244"/>
    </location>
</feature>
<feature type="binding site" evidence="2">
    <location>
        <begin position="38"/>
        <end position="45"/>
    </location>
    <ligand>
        <name>ATP</name>
        <dbReference type="ChEBI" id="CHEBI:30616"/>
    </ligand>
</feature>
<organism>
    <name type="scientific">Pyrococcus abyssi (strain GE5 / Orsay)</name>
    <dbReference type="NCBI Taxonomy" id="272844"/>
    <lineage>
        <taxon>Archaea</taxon>
        <taxon>Methanobacteriati</taxon>
        <taxon>Methanobacteriota</taxon>
        <taxon>Thermococci</taxon>
        <taxon>Thermococcales</taxon>
        <taxon>Thermococcaceae</taxon>
        <taxon>Pyrococcus</taxon>
    </lineage>
</organism>
<name>Y373_PYRAB</name>
<reference key="1">
    <citation type="journal article" date="2003" name="Mol. Microbiol.">
        <title>An integrated analysis of the genome of the hyperthermophilic archaeon Pyrococcus abyssi.</title>
        <authorList>
            <person name="Cohen G.N."/>
            <person name="Barbe V."/>
            <person name="Flament D."/>
            <person name="Galperin M."/>
            <person name="Heilig R."/>
            <person name="Lecompte O."/>
            <person name="Poch O."/>
            <person name="Prieur D."/>
            <person name="Querellou J."/>
            <person name="Ripp R."/>
            <person name="Thierry J.-C."/>
            <person name="Van der Oost J."/>
            <person name="Weissenbach J."/>
            <person name="Zivanovic Y."/>
            <person name="Forterre P."/>
        </authorList>
    </citation>
    <scope>NUCLEOTIDE SEQUENCE [LARGE SCALE GENOMIC DNA]</scope>
    <source>
        <strain>GE5 / Orsay</strain>
    </source>
</reference>
<reference key="2">
    <citation type="journal article" date="2012" name="Curr. Microbiol.">
        <title>Re-annotation of two hyperthermophilic archaea Pyrococcus abyssi GE5 and Pyrococcus furiosus DSM 3638.</title>
        <authorList>
            <person name="Gao J."/>
            <person name="Wang J."/>
        </authorList>
    </citation>
    <scope>GENOME REANNOTATION</scope>
    <source>
        <strain>GE5 / Orsay</strain>
    </source>
</reference>
<evidence type="ECO:0000250" key="1"/>
<evidence type="ECO:0000255" key="2">
    <source>
        <dbReference type="PROSITE-ProRule" id="PRU00434"/>
    </source>
</evidence>
<evidence type="ECO:0000305" key="3"/>
<keyword id="KW-0067">ATP-binding</keyword>
<keyword id="KW-1003">Cell membrane</keyword>
<keyword id="KW-0472">Membrane</keyword>
<keyword id="KW-0547">Nucleotide-binding</keyword>
<keyword id="KW-1278">Translocase</keyword>
<keyword id="KW-0813">Transport</keyword>
<comment type="function">
    <text evidence="1">Probably part of an ABC transporter complex. Responsible for energy coupling to the transport system (By similarity).</text>
</comment>
<comment type="subcellular location">
    <subcellularLocation>
        <location evidence="1">Cell membrane</location>
        <topology evidence="1">Peripheral membrane protein</topology>
    </subcellularLocation>
</comment>
<comment type="similarity">
    <text evidence="3">Belongs to the ABC transporter superfamily.</text>
</comment>
<accession>Q9V1Q4</accession>
<accession>G8ZI07</accession>
<gene>
    <name type="ordered locus">PYRAB03730</name>
    <name type="ORF">PAB0249</name>
</gene>
<dbReference type="EC" id="7.-.-.-"/>
<dbReference type="EMBL" id="AJ248284">
    <property type="protein sequence ID" value="CAB49295.1"/>
    <property type="molecule type" value="Genomic_DNA"/>
</dbReference>
<dbReference type="EMBL" id="HE613800">
    <property type="protein sequence ID" value="CCE69750.1"/>
    <property type="molecule type" value="Genomic_DNA"/>
</dbReference>
<dbReference type="PIR" id="H75151">
    <property type="entry name" value="H75151"/>
</dbReference>
<dbReference type="RefSeq" id="WP_010867495.1">
    <property type="nucleotide sequence ID" value="NC_000868.1"/>
</dbReference>
<dbReference type="SMR" id="Q9V1Q4"/>
<dbReference type="STRING" id="272844.PAB0249"/>
<dbReference type="KEGG" id="pab:PAB0249"/>
<dbReference type="PATRIC" id="fig|272844.11.peg.394"/>
<dbReference type="eggNOG" id="arCOG00202">
    <property type="taxonomic scope" value="Archaea"/>
</dbReference>
<dbReference type="HOGENOM" id="CLU_000604_1_22_2"/>
<dbReference type="OrthoDB" id="18209at2157"/>
<dbReference type="PhylomeDB" id="Q9V1Q4"/>
<dbReference type="Proteomes" id="UP000000810">
    <property type="component" value="Chromosome"/>
</dbReference>
<dbReference type="Proteomes" id="UP000009139">
    <property type="component" value="Chromosome"/>
</dbReference>
<dbReference type="GO" id="GO:0043190">
    <property type="term" value="C:ATP-binding cassette (ABC) transporter complex"/>
    <property type="evidence" value="ECO:0007669"/>
    <property type="project" value="TreeGrafter"/>
</dbReference>
<dbReference type="GO" id="GO:0005524">
    <property type="term" value="F:ATP binding"/>
    <property type="evidence" value="ECO:0007669"/>
    <property type="project" value="UniProtKB-KW"/>
</dbReference>
<dbReference type="GO" id="GO:0016887">
    <property type="term" value="F:ATP hydrolysis activity"/>
    <property type="evidence" value="ECO:0007669"/>
    <property type="project" value="InterPro"/>
</dbReference>
<dbReference type="GO" id="GO:0042626">
    <property type="term" value="F:ATPase-coupled transmembrane transporter activity"/>
    <property type="evidence" value="ECO:0007669"/>
    <property type="project" value="TreeGrafter"/>
</dbReference>
<dbReference type="CDD" id="cd03225">
    <property type="entry name" value="ABC_cobalt_CbiO_domain1"/>
    <property type="match status" value="1"/>
</dbReference>
<dbReference type="FunFam" id="3.40.50.300:FF:000224">
    <property type="entry name" value="Energy-coupling factor transporter ATP-binding protein EcfA"/>
    <property type="match status" value="1"/>
</dbReference>
<dbReference type="Gene3D" id="3.40.50.300">
    <property type="entry name" value="P-loop containing nucleotide triphosphate hydrolases"/>
    <property type="match status" value="1"/>
</dbReference>
<dbReference type="InterPro" id="IPR003593">
    <property type="entry name" value="AAA+_ATPase"/>
</dbReference>
<dbReference type="InterPro" id="IPR003439">
    <property type="entry name" value="ABC_transporter-like_ATP-bd"/>
</dbReference>
<dbReference type="InterPro" id="IPR017871">
    <property type="entry name" value="ABC_transporter-like_CS"/>
</dbReference>
<dbReference type="InterPro" id="IPR015856">
    <property type="entry name" value="ABC_transpr_CbiO/EcfA_su"/>
</dbReference>
<dbReference type="InterPro" id="IPR050095">
    <property type="entry name" value="ECF_ABC_transporter_ATP-bd"/>
</dbReference>
<dbReference type="InterPro" id="IPR027417">
    <property type="entry name" value="P-loop_NTPase"/>
</dbReference>
<dbReference type="PANTHER" id="PTHR43553:SF24">
    <property type="entry name" value="ENERGY-COUPLING FACTOR TRANSPORTER ATP-BINDING PROTEIN ECFA1"/>
    <property type="match status" value="1"/>
</dbReference>
<dbReference type="PANTHER" id="PTHR43553">
    <property type="entry name" value="HEAVY METAL TRANSPORTER"/>
    <property type="match status" value="1"/>
</dbReference>
<dbReference type="Pfam" id="PF00005">
    <property type="entry name" value="ABC_tran"/>
    <property type="match status" value="1"/>
</dbReference>
<dbReference type="SMART" id="SM00382">
    <property type="entry name" value="AAA"/>
    <property type="match status" value="1"/>
</dbReference>
<dbReference type="SUPFAM" id="SSF52540">
    <property type="entry name" value="P-loop containing nucleoside triphosphate hydrolases"/>
    <property type="match status" value="1"/>
</dbReference>
<dbReference type="PROSITE" id="PS00211">
    <property type="entry name" value="ABC_TRANSPORTER_1"/>
    <property type="match status" value="1"/>
</dbReference>
<dbReference type="PROSITE" id="PS50893">
    <property type="entry name" value="ABC_TRANSPORTER_2"/>
    <property type="match status" value="1"/>
</dbReference>
<proteinExistence type="inferred from homology"/>
<sequence length="280" mass="31799">MNIIEVENVSFKYGNSKAYSLRDVNLNVKKGEFLGIIGPSGSGKSTFCLTLNGLIPHSINGEFEGNVFVDGLNTREHSVAELSTRVGLVFQNPDSQLFNMTVLEEVAFALENLGVEREEMWRRIRWALKLVKLWDKREEFPPNLSGGEKQRLAIASVLVMKPKVLVLDEPTSQLDPLGREEVLSLVRLLNKEEKITIILVEHNTDFLLEHADRIVVFDGGRVVMEGKPEEVFENVEFLERIGIRIPTRVKIGYELKKRGITRRAVLSYEEIIAEIAKQLR</sequence>